<reference key="1">
    <citation type="journal article" date="2001" name="Science">
        <title>Complete genome sequence of a virulent isolate of Streptococcus pneumoniae.</title>
        <authorList>
            <person name="Tettelin H."/>
            <person name="Nelson K.E."/>
            <person name="Paulsen I.T."/>
            <person name="Eisen J.A."/>
            <person name="Read T.D."/>
            <person name="Peterson S.N."/>
            <person name="Heidelberg J.F."/>
            <person name="DeBoy R.T."/>
            <person name="Haft D.H."/>
            <person name="Dodson R.J."/>
            <person name="Durkin A.S."/>
            <person name="Gwinn M.L."/>
            <person name="Kolonay J.F."/>
            <person name="Nelson W.C."/>
            <person name="Peterson J.D."/>
            <person name="Umayam L.A."/>
            <person name="White O."/>
            <person name="Salzberg S.L."/>
            <person name="Lewis M.R."/>
            <person name="Radune D."/>
            <person name="Holtzapple E.K."/>
            <person name="Khouri H.M."/>
            <person name="Wolf A.M."/>
            <person name="Utterback T.R."/>
            <person name="Hansen C.L."/>
            <person name="McDonald L.A."/>
            <person name="Feldblyum T.V."/>
            <person name="Angiuoli S.V."/>
            <person name="Dickinson T."/>
            <person name="Hickey E.K."/>
            <person name="Holt I.E."/>
            <person name="Loftus B.J."/>
            <person name="Yang F."/>
            <person name="Smith H.O."/>
            <person name="Venter J.C."/>
            <person name="Dougherty B.A."/>
            <person name="Morrison D.A."/>
            <person name="Hollingshead S.K."/>
            <person name="Fraser C.M."/>
        </authorList>
    </citation>
    <scope>NUCLEOTIDE SEQUENCE [LARGE SCALE GENOMIC DNA]</scope>
    <source>
        <strain>ATCC BAA-334 / TIGR4</strain>
    </source>
</reference>
<feature type="chain" id="PRO_0000273866" description="Large ribosomal subunit protein uL30">
    <location>
        <begin position="1"/>
        <end position="60"/>
    </location>
</feature>
<keyword id="KW-1185">Reference proteome</keyword>
<keyword id="KW-0687">Ribonucleoprotein</keyword>
<keyword id="KW-0689">Ribosomal protein</keyword>
<proteinExistence type="inferred from homology"/>
<protein>
    <recommendedName>
        <fullName evidence="1">Large ribosomal subunit protein uL30</fullName>
    </recommendedName>
    <alternativeName>
        <fullName evidence="2">50S ribosomal protein L30</fullName>
    </alternativeName>
</protein>
<comment type="subunit">
    <text evidence="1">Part of the 50S ribosomal subunit.</text>
</comment>
<comment type="similarity">
    <text evidence="1">Belongs to the universal ribosomal protein uL30 family.</text>
</comment>
<organism>
    <name type="scientific">Streptococcus pneumoniae serotype 4 (strain ATCC BAA-334 / TIGR4)</name>
    <dbReference type="NCBI Taxonomy" id="170187"/>
    <lineage>
        <taxon>Bacteria</taxon>
        <taxon>Bacillati</taxon>
        <taxon>Bacillota</taxon>
        <taxon>Bacilli</taxon>
        <taxon>Lactobacillales</taxon>
        <taxon>Streptococcaceae</taxon>
        <taxon>Streptococcus</taxon>
    </lineage>
</organism>
<name>RL30_STRPN</name>
<gene>
    <name evidence="1" type="primary">rpmD</name>
    <name type="ordered locus">SP_0228</name>
</gene>
<evidence type="ECO:0000255" key="1">
    <source>
        <dbReference type="HAMAP-Rule" id="MF_01371"/>
    </source>
</evidence>
<evidence type="ECO:0000305" key="2"/>
<dbReference type="EMBL" id="AE005672">
    <property type="protein sequence ID" value="AAK74408.1"/>
    <property type="molecule type" value="Genomic_DNA"/>
</dbReference>
<dbReference type="PIR" id="G95026">
    <property type="entry name" value="G95026"/>
</dbReference>
<dbReference type="PIR" id="G97897">
    <property type="entry name" value="G97897"/>
</dbReference>
<dbReference type="RefSeq" id="WP_000057241.1">
    <property type="nucleotide sequence ID" value="NZ_CP155539.1"/>
</dbReference>
<dbReference type="SMR" id="Q97SU4"/>
<dbReference type="PaxDb" id="170187-SP_0228"/>
<dbReference type="EnsemblBacteria" id="AAK74408">
    <property type="protein sequence ID" value="AAK74408"/>
    <property type="gene ID" value="SP_0228"/>
</dbReference>
<dbReference type="GeneID" id="93738975"/>
<dbReference type="KEGG" id="spn:SP_0228"/>
<dbReference type="eggNOG" id="COG1841">
    <property type="taxonomic scope" value="Bacteria"/>
</dbReference>
<dbReference type="PhylomeDB" id="Q97SU4"/>
<dbReference type="Proteomes" id="UP000000585">
    <property type="component" value="Chromosome"/>
</dbReference>
<dbReference type="GO" id="GO:0022625">
    <property type="term" value="C:cytosolic large ribosomal subunit"/>
    <property type="evidence" value="ECO:0007669"/>
    <property type="project" value="TreeGrafter"/>
</dbReference>
<dbReference type="GO" id="GO:0003735">
    <property type="term" value="F:structural constituent of ribosome"/>
    <property type="evidence" value="ECO:0007669"/>
    <property type="project" value="InterPro"/>
</dbReference>
<dbReference type="GO" id="GO:0006412">
    <property type="term" value="P:translation"/>
    <property type="evidence" value="ECO:0007669"/>
    <property type="project" value="UniProtKB-UniRule"/>
</dbReference>
<dbReference type="CDD" id="cd01658">
    <property type="entry name" value="Ribosomal_L30"/>
    <property type="match status" value="1"/>
</dbReference>
<dbReference type="FunFam" id="3.30.1390.20:FF:000001">
    <property type="entry name" value="50S ribosomal protein L30"/>
    <property type="match status" value="1"/>
</dbReference>
<dbReference type="Gene3D" id="3.30.1390.20">
    <property type="entry name" value="Ribosomal protein L30, ferredoxin-like fold domain"/>
    <property type="match status" value="1"/>
</dbReference>
<dbReference type="HAMAP" id="MF_01371_B">
    <property type="entry name" value="Ribosomal_uL30_B"/>
    <property type="match status" value="1"/>
</dbReference>
<dbReference type="InterPro" id="IPR036919">
    <property type="entry name" value="Ribo_uL30_ferredoxin-like_sf"/>
</dbReference>
<dbReference type="InterPro" id="IPR005996">
    <property type="entry name" value="Ribosomal_uL30_bac-type"/>
</dbReference>
<dbReference type="InterPro" id="IPR018038">
    <property type="entry name" value="Ribosomal_uL30_CS"/>
</dbReference>
<dbReference type="InterPro" id="IPR016082">
    <property type="entry name" value="Ribosomal_uL30_ferredoxin-like"/>
</dbReference>
<dbReference type="NCBIfam" id="TIGR01308">
    <property type="entry name" value="rpmD_bact"/>
    <property type="match status" value="1"/>
</dbReference>
<dbReference type="PANTHER" id="PTHR15892:SF2">
    <property type="entry name" value="LARGE RIBOSOMAL SUBUNIT PROTEIN UL30M"/>
    <property type="match status" value="1"/>
</dbReference>
<dbReference type="PANTHER" id="PTHR15892">
    <property type="entry name" value="MITOCHONDRIAL RIBOSOMAL PROTEIN L30"/>
    <property type="match status" value="1"/>
</dbReference>
<dbReference type="Pfam" id="PF00327">
    <property type="entry name" value="Ribosomal_L30"/>
    <property type="match status" value="1"/>
</dbReference>
<dbReference type="PIRSF" id="PIRSF002211">
    <property type="entry name" value="Ribosomal_L30_bac-type"/>
    <property type="match status" value="1"/>
</dbReference>
<dbReference type="SUPFAM" id="SSF55129">
    <property type="entry name" value="Ribosomal protein L30p/L7e"/>
    <property type="match status" value="1"/>
</dbReference>
<dbReference type="PROSITE" id="PS00634">
    <property type="entry name" value="RIBOSOMAL_L30"/>
    <property type="match status" value="1"/>
</dbReference>
<sequence>MAQIKITLTKSPIGRIPSQRKTVVALGLGKLNSSVIKEDNAAIRGMITAVSHLVTVEEVN</sequence>
<accession>Q97SU4</accession>